<reference key="1">
    <citation type="journal article" date="2004" name="Science">
        <title>Illuminating the evolutionary history of chlamydiae.</title>
        <authorList>
            <person name="Horn M."/>
            <person name="Collingro A."/>
            <person name="Schmitz-Esser S."/>
            <person name="Beier C.L."/>
            <person name="Purkhold U."/>
            <person name="Fartmann B."/>
            <person name="Brandt P."/>
            <person name="Nyakatura G.J."/>
            <person name="Droege M."/>
            <person name="Frishman D."/>
            <person name="Rattei T."/>
            <person name="Mewes H.-W."/>
            <person name="Wagner M."/>
        </authorList>
    </citation>
    <scope>NUCLEOTIDE SEQUENCE [LARGE SCALE GENOMIC DNA]</scope>
    <source>
        <strain>UWE25</strain>
    </source>
</reference>
<keyword id="KW-0131">Cell cycle</keyword>
<keyword id="KW-0132">Cell division</keyword>
<keyword id="KW-0143">Chaperone</keyword>
<keyword id="KW-0963">Cytoplasm</keyword>
<keyword id="KW-0413">Isomerase</keyword>
<keyword id="KW-1185">Reference proteome</keyword>
<keyword id="KW-0697">Rotamase</keyword>
<name>TIG_PARUW</name>
<comment type="function">
    <text evidence="1">Involved in protein export. Acts as a chaperone by maintaining the newly synthesized protein in an open conformation. Functions as a peptidyl-prolyl cis-trans isomerase.</text>
</comment>
<comment type="catalytic activity">
    <reaction evidence="1">
        <text>[protein]-peptidylproline (omega=180) = [protein]-peptidylproline (omega=0)</text>
        <dbReference type="Rhea" id="RHEA:16237"/>
        <dbReference type="Rhea" id="RHEA-COMP:10747"/>
        <dbReference type="Rhea" id="RHEA-COMP:10748"/>
        <dbReference type="ChEBI" id="CHEBI:83833"/>
        <dbReference type="ChEBI" id="CHEBI:83834"/>
        <dbReference type="EC" id="5.2.1.8"/>
    </reaction>
</comment>
<comment type="subcellular location">
    <subcellularLocation>
        <location>Cytoplasm</location>
    </subcellularLocation>
    <text evidence="1">About half TF is bound to the ribosome near the polypeptide exit tunnel while the other half is free in the cytoplasm.</text>
</comment>
<comment type="domain">
    <text evidence="1">Consists of 3 domains; the N-terminus binds the ribosome, the middle domain has PPIase activity, while the C-terminus has intrinsic chaperone activity on its own.</text>
</comment>
<comment type="similarity">
    <text evidence="1">Belongs to the FKBP-type PPIase family. Tig subfamily.</text>
</comment>
<gene>
    <name evidence="1" type="primary">tig</name>
    <name type="ordered locus">pc1375</name>
</gene>
<proteinExistence type="inferred from homology"/>
<accession>Q6MBF0</accession>
<feature type="chain" id="PRO_0000179400" description="Trigger factor">
    <location>
        <begin position="1"/>
        <end position="435"/>
    </location>
</feature>
<feature type="domain" description="PPIase FKBP-type" evidence="1">
    <location>
        <begin position="183"/>
        <end position="263"/>
    </location>
</feature>
<sequence length="435" mass="49876">MSNQETEAGSKTISNDNLNVQITRGTHCQVKFDITVKPEAVVAAYQKALKTINKEINIPGFRKGKAPQQLILEKYGSNVQKECVDIVLQTGFNDALQLTHIHPLKDGHIKRPIVHYCTQEKGAHFVLEFEARPTIPSVQPQELHLHHQAPVQVTDEERKNALDQVLLQFTTYQPIEDRPVQEGDFINVDVTILEETPRLIIDNQRTQVNQSGLPSWIQEKVIGLNAGASAEGMTQPNEKFPDPDFKSVPFRVTVKTIWQGNMPAIDDELAKKVGLQTVDELYQKLNERLEQEAQEDIYKQHIHHLEDQLIEKYPFDLPLSYIESNKQARLDDYLKQLGQESQLPQNYEEIEKMIENSTIRGLQLYFLLRRVAADNKLEVSEEEVSQELSKQIALIPSGKSQIDIYGDKSKLREQLYNLALDRKIKKFLLDQAQWV</sequence>
<protein>
    <recommendedName>
        <fullName evidence="1">Trigger factor</fullName>
        <shortName evidence="1">TF</shortName>
        <ecNumber evidence="1">5.2.1.8</ecNumber>
    </recommendedName>
    <alternativeName>
        <fullName evidence="1">PPIase</fullName>
    </alternativeName>
</protein>
<organism>
    <name type="scientific">Protochlamydia amoebophila (strain UWE25)</name>
    <dbReference type="NCBI Taxonomy" id="264201"/>
    <lineage>
        <taxon>Bacteria</taxon>
        <taxon>Pseudomonadati</taxon>
        <taxon>Chlamydiota</taxon>
        <taxon>Chlamydiia</taxon>
        <taxon>Parachlamydiales</taxon>
        <taxon>Parachlamydiaceae</taxon>
        <taxon>Candidatus Protochlamydia</taxon>
    </lineage>
</organism>
<dbReference type="EC" id="5.2.1.8" evidence="1"/>
<dbReference type="EMBL" id="BX908798">
    <property type="protein sequence ID" value="CAF24099.1"/>
    <property type="molecule type" value="Genomic_DNA"/>
</dbReference>
<dbReference type="RefSeq" id="WP_011175924.1">
    <property type="nucleotide sequence ID" value="NC_005861.2"/>
</dbReference>
<dbReference type="SMR" id="Q6MBF0"/>
<dbReference type="STRING" id="264201.pc1375"/>
<dbReference type="eggNOG" id="COG0544">
    <property type="taxonomic scope" value="Bacteria"/>
</dbReference>
<dbReference type="HOGENOM" id="CLU_033058_3_1_0"/>
<dbReference type="Proteomes" id="UP000000529">
    <property type="component" value="Chromosome"/>
</dbReference>
<dbReference type="GO" id="GO:0005737">
    <property type="term" value="C:cytoplasm"/>
    <property type="evidence" value="ECO:0007669"/>
    <property type="project" value="UniProtKB-SubCell"/>
</dbReference>
<dbReference type="GO" id="GO:0003755">
    <property type="term" value="F:peptidyl-prolyl cis-trans isomerase activity"/>
    <property type="evidence" value="ECO:0007669"/>
    <property type="project" value="UniProtKB-UniRule"/>
</dbReference>
<dbReference type="GO" id="GO:0044183">
    <property type="term" value="F:protein folding chaperone"/>
    <property type="evidence" value="ECO:0007669"/>
    <property type="project" value="TreeGrafter"/>
</dbReference>
<dbReference type="GO" id="GO:0043022">
    <property type="term" value="F:ribosome binding"/>
    <property type="evidence" value="ECO:0007669"/>
    <property type="project" value="TreeGrafter"/>
</dbReference>
<dbReference type="GO" id="GO:0051083">
    <property type="term" value="P:'de novo' cotranslational protein folding"/>
    <property type="evidence" value="ECO:0007669"/>
    <property type="project" value="TreeGrafter"/>
</dbReference>
<dbReference type="GO" id="GO:0051301">
    <property type="term" value="P:cell division"/>
    <property type="evidence" value="ECO:0007669"/>
    <property type="project" value="UniProtKB-KW"/>
</dbReference>
<dbReference type="GO" id="GO:0061077">
    <property type="term" value="P:chaperone-mediated protein folding"/>
    <property type="evidence" value="ECO:0007669"/>
    <property type="project" value="TreeGrafter"/>
</dbReference>
<dbReference type="GO" id="GO:0015031">
    <property type="term" value="P:protein transport"/>
    <property type="evidence" value="ECO:0007669"/>
    <property type="project" value="UniProtKB-UniRule"/>
</dbReference>
<dbReference type="GO" id="GO:0043335">
    <property type="term" value="P:protein unfolding"/>
    <property type="evidence" value="ECO:0007669"/>
    <property type="project" value="TreeGrafter"/>
</dbReference>
<dbReference type="Gene3D" id="3.10.50.40">
    <property type="match status" value="1"/>
</dbReference>
<dbReference type="Gene3D" id="3.30.70.1050">
    <property type="entry name" value="Trigger factor ribosome-binding domain"/>
    <property type="match status" value="1"/>
</dbReference>
<dbReference type="Gene3D" id="1.10.3120.10">
    <property type="entry name" value="Trigger factor, C-terminal domain"/>
    <property type="match status" value="1"/>
</dbReference>
<dbReference type="HAMAP" id="MF_00303">
    <property type="entry name" value="Trigger_factor_Tig"/>
    <property type="match status" value="1"/>
</dbReference>
<dbReference type="InterPro" id="IPR046357">
    <property type="entry name" value="PPIase_dom_sf"/>
</dbReference>
<dbReference type="InterPro" id="IPR005215">
    <property type="entry name" value="Trig_fac"/>
</dbReference>
<dbReference type="InterPro" id="IPR008880">
    <property type="entry name" value="Trigger_fac_C"/>
</dbReference>
<dbReference type="InterPro" id="IPR037041">
    <property type="entry name" value="Trigger_fac_C_sf"/>
</dbReference>
<dbReference type="InterPro" id="IPR008881">
    <property type="entry name" value="Trigger_fac_ribosome-bd_bac"/>
</dbReference>
<dbReference type="InterPro" id="IPR036611">
    <property type="entry name" value="Trigger_fac_ribosome-bd_sf"/>
</dbReference>
<dbReference type="InterPro" id="IPR027304">
    <property type="entry name" value="Trigger_fact/SurA_dom_sf"/>
</dbReference>
<dbReference type="NCBIfam" id="TIGR00115">
    <property type="entry name" value="tig"/>
    <property type="match status" value="1"/>
</dbReference>
<dbReference type="PANTHER" id="PTHR30560">
    <property type="entry name" value="TRIGGER FACTOR CHAPERONE AND PEPTIDYL-PROLYL CIS/TRANS ISOMERASE"/>
    <property type="match status" value="1"/>
</dbReference>
<dbReference type="PANTHER" id="PTHR30560:SF3">
    <property type="entry name" value="TRIGGER FACTOR-LIKE PROTEIN TIG, CHLOROPLASTIC"/>
    <property type="match status" value="1"/>
</dbReference>
<dbReference type="Pfam" id="PF05698">
    <property type="entry name" value="Trigger_C"/>
    <property type="match status" value="1"/>
</dbReference>
<dbReference type="Pfam" id="PF05697">
    <property type="entry name" value="Trigger_N"/>
    <property type="match status" value="1"/>
</dbReference>
<dbReference type="PIRSF" id="PIRSF003095">
    <property type="entry name" value="Trigger_factor"/>
    <property type="match status" value="1"/>
</dbReference>
<dbReference type="SUPFAM" id="SSF54534">
    <property type="entry name" value="FKBP-like"/>
    <property type="match status" value="1"/>
</dbReference>
<dbReference type="SUPFAM" id="SSF109998">
    <property type="entry name" value="Triger factor/SurA peptide-binding domain-like"/>
    <property type="match status" value="1"/>
</dbReference>
<dbReference type="SUPFAM" id="SSF102735">
    <property type="entry name" value="Trigger factor ribosome-binding domain"/>
    <property type="match status" value="1"/>
</dbReference>
<evidence type="ECO:0000255" key="1">
    <source>
        <dbReference type="HAMAP-Rule" id="MF_00303"/>
    </source>
</evidence>